<evidence type="ECO:0000255" key="1">
    <source>
        <dbReference type="HAMAP-Rule" id="MF_01889"/>
    </source>
</evidence>
<evidence type="ECO:0000256" key="2">
    <source>
        <dbReference type="SAM" id="MobiDB-lite"/>
    </source>
</evidence>
<evidence type="ECO:0000305" key="3"/>
<dbReference type="EMBL" id="CP002038">
    <property type="protein sequence ID" value="ADM98981.1"/>
    <property type="status" value="ALT_INIT"/>
    <property type="molecule type" value="Genomic_DNA"/>
</dbReference>
<dbReference type="RefSeq" id="WP_033111931.1">
    <property type="nucleotide sequence ID" value="NC_014500.1"/>
</dbReference>
<dbReference type="SMR" id="E0SHN8"/>
<dbReference type="STRING" id="198628.Dda3937_02256"/>
<dbReference type="KEGG" id="ddd:Dda3937_02256"/>
<dbReference type="PATRIC" id="fig|198628.6.peg.2774"/>
<dbReference type="eggNOG" id="COG3417">
    <property type="taxonomic scope" value="Bacteria"/>
</dbReference>
<dbReference type="HOGENOM" id="CLU_092328_0_0_6"/>
<dbReference type="OrthoDB" id="6466283at2"/>
<dbReference type="Proteomes" id="UP000006859">
    <property type="component" value="Chromosome"/>
</dbReference>
<dbReference type="GO" id="GO:0031241">
    <property type="term" value="C:periplasmic side of cell outer membrane"/>
    <property type="evidence" value="ECO:0007669"/>
    <property type="project" value="UniProtKB-UniRule"/>
</dbReference>
<dbReference type="GO" id="GO:0030234">
    <property type="term" value="F:enzyme regulator activity"/>
    <property type="evidence" value="ECO:0007669"/>
    <property type="project" value="UniProtKB-UniRule"/>
</dbReference>
<dbReference type="GO" id="GO:0009252">
    <property type="term" value="P:peptidoglycan biosynthetic process"/>
    <property type="evidence" value="ECO:0007669"/>
    <property type="project" value="UniProtKB-UniRule"/>
</dbReference>
<dbReference type="GO" id="GO:0008360">
    <property type="term" value="P:regulation of cell shape"/>
    <property type="evidence" value="ECO:0007669"/>
    <property type="project" value="UniProtKB-KW"/>
</dbReference>
<dbReference type="Gene3D" id="3.40.50.10610">
    <property type="entry name" value="ABC-type transport auxiliary lipoprotein component"/>
    <property type="match status" value="1"/>
</dbReference>
<dbReference type="HAMAP" id="MF_01889">
    <property type="entry name" value="LpoB"/>
    <property type="match status" value="1"/>
</dbReference>
<dbReference type="InterPro" id="IPR014094">
    <property type="entry name" value="LpoB"/>
</dbReference>
<dbReference type="NCBIfam" id="TIGR02722">
    <property type="entry name" value="lp"/>
    <property type="match status" value="1"/>
</dbReference>
<dbReference type="PANTHER" id="PTHR40593">
    <property type="entry name" value="PENICILLIN-BINDING PROTEIN ACTIVATOR LPOB"/>
    <property type="match status" value="1"/>
</dbReference>
<dbReference type="PANTHER" id="PTHR40593:SF1">
    <property type="entry name" value="PENICILLIN-BINDING PROTEIN ACTIVATOR LPOB"/>
    <property type="match status" value="1"/>
</dbReference>
<dbReference type="Pfam" id="PF13036">
    <property type="entry name" value="LpoB"/>
    <property type="match status" value="1"/>
</dbReference>
<dbReference type="PROSITE" id="PS51257">
    <property type="entry name" value="PROKAR_LIPOPROTEIN"/>
    <property type="match status" value="1"/>
</dbReference>
<comment type="function">
    <text evidence="1">Regulator of peptidoglycan synthesis that is essential for the function of penicillin-binding protein 1B (PBP1b).</text>
</comment>
<comment type="subunit">
    <text evidence="1">Interacts with PBP1b.</text>
</comment>
<comment type="subcellular location">
    <subcellularLocation>
        <location evidence="1">Cell outer membrane</location>
        <topology evidence="1">Lipid-anchor</topology>
        <orientation evidence="1">Periplasmic side</orientation>
    </subcellularLocation>
</comment>
<comment type="similarity">
    <text evidence="1">Belongs to the LpoB family.</text>
</comment>
<comment type="sequence caution" evidence="3">
    <conflict type="erroneous initiation">
        <sequence resource="EMBL-CDS" id="ADM98981"/>
    </conflict>
    <text>Extended N-terminus.</text>
</comment>
<reference key="1">
    <citation type="journal article" date="2011" name="J. Bacteriol.">
        <title>Genome sequence of the plant-pathogenic bacterium Dickeya dadantii 3937.</title>
        <authorList>
            <person name="Glasner J.D."/>
            <person name="Yang C.H."/>
            <person name="Reverchon S."/>
            <person name="Hugouvieux-Cotte-Pattat N."/>
            <person name="Condemine G."/>
            <person name="Bohin J.P."/>
            <person name="Van Gijsegem F."/>
            <person name="Yang S."/>
            <person name="Franza T."/>
            <person name="Expert D."/>
            <person name="Plunkett G. III"/>
            <person name="San Francisco M.J."/>
            <person name="Charkowski A.O."/>
            <person name="Py B."/>
            <person name="Bell K."/>
            <person name="Rauscher L."/>
            <person name="Rodriguez-Palenzuela P."/>
            <person name="Toussaint A."/>
            <person name="Holeva M.C."/>
            <person name="He S.Y."/>
            <person name="Douet V."/>
            <person name="Boccara M."/>
            <person name="Blanco C."/>
            <person name="Toth I."/>
            <person name="Anderson B.D."/>
            <person name="Biehl B.S."/>
            <person name="Mau B."/>
            <person name="Flynn S.M."/>
            <person name="Barras F."/>
            <person name="Lindeberg M."/>
            <person name="Birch P.R."/>
            <person name="Tsuyumu S."/>
            <person name="Shi X."/>
            <person name="Hibbing M."/>
            <person name="Yap M.N."/>
            <person name="Carpentier M."/>
            <person name="Dassa E."/>
            <person name="Umehara M."/>
            <person name="Kim J.F."/>
            <person name="Rusch M."/>
            <person name="Soni P."/>
            <person name="Mayhew G.F."/>
            <person name="Fouts D.E."/>
            <person name="Gill S.R."/>
            <person name="Blattner F.R."/>
            <person name="Keen N.T."/>
            <person name="Perna N.T."/>
        </authorList>
    </citation>
    <scope>NUCLEOTIDE SEQUENCE [LARGE SCALE GENOMIC DNA]</scope>
    <source>
        <strain>3937</strain>
    </source>
</reference>
<proteinExistence type="inferred from homology"/>
<feature type="signal peptide" evidence="1">
    <location>
        <begin position="1"/>
        <end position="16"/>
    </location>
</feature>
<feature type="chain" id="PRO_0000405781" description="Penicillin-binding protein activator LpoB">
    <location>
        <begin position="17"/>
        <end position="196"/>
    </location>
</feature>
<feature type="region of interest" description="Disordered" evidence="2">
    <location>
        <begin position="24"/>
        <end position="54"/>
    </location>
</feature>
<feature type="compositionally biased region" description="Pro residues" evidence="2">
    <location>
        <begin position="34"/>
        <end position="43"/>
    </location>
</feature>
<feature type="lipid moiety-binding region" description="N-palmitoyl cysteine" evidence="1">
    <location>
        <position position="17"/>
    </location>
</feature>
<feature type="lipid moiety-binding region" description="S-diacylglycerol cysteine" evidence="1">
    <location>
        <position position="17"/>
    </location>
</feature>
<gene>
    <name evidence="1" type="primary">lpoB</name>
    <name type="ordered locus">Dda3937_02256</name>
</gene>
<sequence>MKKYLGIVLMALVIAGCTSRVPQTEQPATIEPAVPTPSKPQLPPSESQPLPTPPKIQVPVLDWSAAVTPLVGQMVKTDGIARGSILLLNKLKNNTNGSLQTAQATTALYNALASSGQFTMVSREQLGVARQSLGLSEEDSLESRSKAVGLARYVGAQYVLYADASGDVKSPELSMQLMLVQTGEIVWSGNGTVRQQ</sequence>
<keyword id="KW-0998">Cell outer membrane</keyword>
<keyword id="KW-0133">Cell shape</keyword>
<keyword id="KW-0449">Lipoprotein</keyword>
<keyword id="KW-0472">Membrane</keyword>
<keyword id="KW-0564">Palmitate</keyword>
<keyword id="KW-0573">Peptidoglycan synthesis</keyword>
<keyword id="KW-1185">Reference proteome</keyword>
<keyword id="KW-0732">Signal</keyword>
<protein>
    <recommendedName>
        <fullName evidence="1">Penicillin-binding protein activator LpoB</fullName>
        <shortName evidence="1">PBP activator LpoB</shortName>
    </recommendedName>
</protein>
<name>LPOB_DICD3</name>
<accession>E0SHN8</accession>
<organism>
    <name type="scientific">Dickeya dadantii (strain 3937)</name>
    <name type="common">Erwinia chrysanthemi (strain 3937)</name>
    <dbReference type="NCBI Taxonomy" id="198628"/>
    <lineage>
        <taxon>Bacteria</taxon>
        <taxon>Pseudomonadati</taxon>
        <taxon>Pseudomonadota</taxon>
        <taxon>Gammaproteobacteria</taxon>
        <taxon>Enterobacterales</taxon>
        <taxon>Pectobacteriaceae</taxon>
        <taxon>Dickeya</taxon>
    </lineage>
</organism>